<reference key="1">
    <citation type="submission" date="2002-03" db="EMBL/GenBank/DDBJ databases">
        <title>Purification and characterization of an extracellular nuclease from Aeromonas hydrophila ATCC 14715.</title>
        <authorList>
            <person name="Joh K."/>
            <person name="Myung H."/>
            <person name="Nam I.Y."/>
        </authorList>
    </citation>
    <scope>NUCLEOTIDE SEQUENCE [GENOMIC DNA]</scope>
    <source>
        <strain>ATCC 14715 / LMG 13663</strain>
    </source>
</reference>
<evidence type="ECO:0000255" key="1"/>
<evidence type="ECO:0000305" key="2"/>
<feature type="signal peptide" evidence="1">
    <location>
        <begin position="1"/>
        <end position="20"/>
    </location>
</feature>
<feature type="chain" id="PRO_0000007832" description="Extracellular deoxyribonuclease">
    <location>
        <begin position="21"/>
        <end position="227"/>
    </location>
</feature>
<keyword id="KW-0255">Endonuclease</keyword>
<keyword id="KW-0378">Hydrolase</keyword>
<keyword id="KW-0540">Nuclease</keyword>
<keyword id="KW-0964">Secreted</keyword>
<keyword id="KW-0732">Signal</keyword>
<comment type="subcellular location">
    <subcellularLocation>
        <location evidence="2">Secreted</location>
    </subcellularLocation>
</comment>
<comment type="similarity">
    <text evidence="2">Belongs to the EndA/NucM nuclease family.</text>
</comment>
<sequence>MFRPLLSFTLARLVSLPLHAQTFRAAKQDLNRLYQDHPVTFYCGCKIEYQGKKMSPDLASCGYEPRKQAKRANRIEWEHVVPAWEFGHQLQCWQQGGRKNCGKTDEFNQMEGDMHNLFPAIGEVNVDRANYRFSDWNGTPHQYGQCQMLVDFKERQVQPPKGLVRGQIARAYLYMSQQYGPGLAAQQRKLFEAWDRQYPADGWECERNRRIGKLQGNTNPFIEKQCQ</sequence>
<proteinExistence type="inferred from homology"/>
<organism>
    <name type="scientific">Aeromonas hydrophila</name>
    <dbReference type="NCBI Taxonomy" id="644"/>
    <lineage>
        <taxon>Bacteria</taxon>
        <taxon>Pseudomonadati</taxon>
        <taxon>Pseudomonadota</taxon>
        <taxon>Gammaproteobacteria</taxon>
        <taxon>Aeromonadales</taxon>
        <taxon>Aeromonadaceae</taxon>
        <taxon>Aeromonas</taxon>
    </lineage>
</organism>
<dbReference type="EC" id="3.1.21.-"/>
<dbReference type="EMBL" id="AF004392">
    <property type="protein sequence ID" value="AAB61738.2"/>
    <property type="molecule type" value="Genomic_DNA"/>
</dbReference>
<dbReference type="SMR" id="O31222"/>
<dbReference type="GO" id="GO:0005576">
    <property type="term" value="C:extracellular region"/>
    <property type="evidence" value="ECO:0007669"/>
    <property type="project" value="UniProtKB-SubCell"/>
</dbReference>
<dbReference type="GO" id="GO:0004519">
    <property type="term" value="F:endonuclease activity"/>
    <property type="evidence" value="ECO:0007669"/>
    <property type="project" value="UniProtKB-KW"/>
</dbReference>
<dbReference type="InterPro" id="IPR007346">
    <property type="entry name" value="Endonuclease-I"/>
</dbReference>
<dbReference type="InterPro" id="IPR044925">
    <property type="entry name" value="His-Me_finger_sf"/>
</dbReference>
<dbReference type="PANTHER" id="PTHR33607">
    <property type="entry name" value="ENDONUCLEASE-1"/>
    <property type="match status" value="1"/>
</dbReference>
<dbReference type="PANTHER" id="PTHR33607:SF2">
    <property type="entry name" value="ENDONUCLEASE-1"/>
    <property type="match status" value="1"/>
</dbReference>
<dbReference type="Pfam" id="PF04231">
    <property type="entry name" value="Endonuclease_1"/>
    <property type="match status" value="1"/>
</dbReference>
<dbReference type="SUPFAM" id="SSF54060">
    <property type="entry name" value="His-Me finger endonucleases"/>
    <property type="match status" value="1"/>
</dbReference>
<accession>O31222</accession>
<protein>
    <recommendedName>
        <fullName>Extracellular deoxyribonuclease</fullName>
        <shortName>DNase</shortName>
        <ecNumber>3.1.21.-</ecNumber>
    </recommendedName>
</protein>
<name>DRNG_AERHY</name>